<comment type="function">
    <text evidence="3 4 7 9 10">Forms the helical nucleocapsid (NC) in a ratio of 1 N per 6 ribonucleotides, protecting the genome from nucleases (By similarity). The nucleocapsid (NC) has a helical structure with either 12.35 or 11.64 N per turn, approximately 20 nm in diameter, with a hollow central cavity approximately 5 nm in diameter (By similarity). The encapsidated genomic RNA serves as template for transcription and replication; encapsidation by N is coupled to RNA synthesis (By similarity). Forms the encapsidation complex with the phosphoprotein protein P (PubMed:26719278). Before encapsidation, the newly synthesized free N protein, so-called N0, is chaperoned by P (By similarity). Participates, together with P, in the formation of viral factories (viroplasms), which are large inclusions in the host cytoplasm where replication takes place (By similarity). N is released in the blood following lysis of measles infected cells, it interacts then with human FCGR2B on immune cells, inducing apoptosis and blocking inflammatory immune response (PubMed:15914856).</text>
</comment>
<comment type="subunit">
    <text evidence="1 3 5 6 7 9 10">Homomultimer; forms the nucleocapsid (By similarity). Binds to viral genomic RNA (By similarity). N0 interacts (via Ncore) with the phosphoprotein (via N-terminus); this interaction allows P to chaperon N0 to avoid N polymerization and non-specific RNA binding before encapsidation (PubMed:26719278). Interacts (via the Ntail) as N-RNA template with the phosphoprotein (via C-terminus XD); this interaction maintains the P/L complex anchored to the nucleocapsid template during the sequential transcription (By similarity). Interacts with the phosphoprotein; this interaction leads to the formation of membraneless organelles that function as viral replication factories (By similarity). Interacts (via Ncore) with human FCGR2B protein (PubMed:15914856). Interacts (via Ntail) with a protein on human thymic epithelial cells, termed Nucleoprotein Receptor (NR); this interaction induces growth arrest (PubMed:15914856, PubMed:14557619). Interacts with human PPIA/CYPA and PPIB/CYPB (By similarity).</text>
</comment>
<comment type="subcellular location">
    <subcellularLocation>
        <location evidence="2">Virion</location>
    </subcellularLocation>
    <subcellularLocation>
        <location evidence="2">Host cytoplasm</location>
    </subcellularLocation>
    <subcellularLocation>
        <location evidence="2">Host nucleus</location>
    </subcellularLocation>
</comment>
<comment type="domain">
    <text evidence="10">Ncore is globular and carries regions required for N self-assembly and RNA-binding. Ntail is an intrinsically disordered monomeric domain in the C-terminus.</text>
</comment>
<comment type="PTM">
    <text evidence="7">Phosphorylation at Thr-279 is required for the formation of the nucleocapsid.</text>
</comment>
<comment type="similarity">
    <text evidence="11">Belongs to the paramyxoviruses nucleocapsid family.</text>
</comment>
<comment type="caution">
    <text evidence="12">The strains used in this publication turn out to be Edmonston strain viruses, contrasting with their claimed origin from reconsituted measles virus genomic cDNAs containing a genetic tag.</text>
</comment>
<sequence length="525" mass="58131">MATLLRSLALFKRNKDKPPITSGSGGAIRGIKHIIIVPIPGDSSITTRSRLLDRLVRLIGNPDVSGPKLTGALIGILSLFVESPGQLIQRITDDPDVSIRLLEVVQSDQSQSGLTFASRGTNMEDEADQYFSHDDPISSDQSRFGWFENKEISDIEVQDPEGFNMILGTILAQIWVLLAKAVTAPDTAADSELRRWIKYTQQRRVVGEFRLERKWLDVVRNRIAEDLSLRRFMVALILDIKRTPGNKPRIAEMICDIDTYIVEAGLASFILTIKFGIETMYPALGLHEFAGELSTLESLMNLYQQMGETAPYMVILENSIQNKFSAGSYPLLWSYAMGVGVELENSMGGLNFGRSYFDPAYFRLGQEMVRRSAGKVSSTLASELGITAEDARLVSEIAMHTTEDKISRAVGPRQAQVSFLHGDQSENELPRLGGKEDRRVKQSRGEARESYRETGPSRASDARAAHLPTGTPLDIDTASESSQDPQDSRRSADALLRLQAMAGISEEQGSDTDTPIVYNDRNLLD</sequence>
<feature type="chain" id="PRO_0000142655" description="Nucleoprotein">
    <location>
        <begin position="1"/>
        <end position="525"/>
    </location>
</feature>
<feature type="region of interest" description="Ncore" evidence="3">
    <location>
        <begin position="1"/>
        <end position="403"/>
    </location>
</feature>
<feature type="region of interest" description="RNA packaging and organization of the helical nucleocapsid" evidence="10">
    <location>
        <begin position="1"/>
        <end position="375"/>
    </location>
</feature>
<feature type="region of interest" description="Homomultimerization" evidence="4">
    <location>
        <begin position="1"/>
        <end position="36"/>
    </location>
</feature>
<feature type="region of interest" description="Homomultimerization" evidence="4">
    <location>
        <begin position="373"/>
        <end position="391"/>
    </location>
</feature>
<feature type="region of interest" description="Ntail" evidence="3">
    <location>
        <begin position="404"/>
        <end position="525"/>
    </location>
</feature>
<feature type="region of interest" description="Disordered" evidence="8">
    <location>
        <begin position="418"/>
        <end position="525"/>
    </location>
</feature>
<feature type="region of interest" description="Interaction with the phosphoprotein" evidence="6">
    <location>
        <begin position="477"/>
        <end position="505"/>
    </location>
</feature>
<feature type="short sequence motif" description="Nuclear localization signal" evidence="2">
    <location>
        <begin position="70"/>
        <end position="77"/>
    </location>
</feature>
<feature type="short sequence motif" description="Nuclear export signal" evidence="2">
    <location>
        <begin position="425"/>
        <end position="440"/>
    </location>
</feature>
<feature type="compositionally biased region" description="Basic and acidic residues" evidence="8">
    <location>
        <begin position="433"/>
        <end position="452"/>
    </location>
</feature>
<feature type="binding site" evidence="6">
    <location>
        <position position="180"/>
    </location>
    <ligand>
        <name>RNA</name>
        <dbReference type="ChEBI" id="CHEBI:33697"/>
    </ligand>
</feature>
<feature type="binding site" evidence="6">
    <location>
        <position position="195"/>
    </location>
    <ligand>
        <name>RNA</name>
        <dbReference type="ChEBI" id="CHEBI:33697"/>
    </ligand>
</feature>
<feature type="binding site" evidence="6">
    <location>
        <position position="202"/>
    </location>
    <ligand>
        <name>RNA</name>
        <dbReference type="ChEBI" id="CHEBI:33697"/>
    </ligand>
</feature>
<feature type="binding site" evidence="6">
    <location>
        <position position="260"/>
    </location>
    <ligand>
        <name>RNA</name>
        <dbReference type="ChEBI" id="CHEBI:33697"/>
    </ligand>
</feature>
<feature type="binding site" evidence="6">
    <location>
        <position position="351"/>
    </location>
    <ligand>
        <name>RNA</name>
        <dbReference type="ChEBI" id="CHEBI:33697"/>
    </ligand>
</feature>
<feature type="modified residue" description="Phosphothreonine; by host" evidence="7">
    <location>
        <position position="279"/>
    </location>
</feature>
<feature type="sequence variant">
    <original>L</original>
    <variation>S</variation>
    <location>
        <position position="58"/>
    </location>
</feature>
<feature type="sequence variant">
    <original>Q</original>
    <variation>K</variation>
    <location>
        <position position="129"/>
    </location>
</feature>
<feature type="sequence variant">
    <original>I</original>
    <variation>S</variation>
    <location>
        <position position="137"/>
    </location>
</feature>
<feature type="sequence variant">
    <original>E</original>
    <variation>G</variation>
    <location>
        <position position="148"/>
    </location>
</feature>
<feature type="sequence variant">
    <original>V</original>
    <variation>G</variation>
    <location>
        <position position="262"/>
    </location>
</feature>
<feature type="sequence variant">
    <original>K</original>
    <variation>R</variation>
    <location>
        <position position="405"/>
    </location>
</feature>
<feature type="sequence variant">
    <original>G</original>
    <variation>A</variation>
    <location>
        <position position="434"/>
    </location>
</feature>
<feature type="sequence variant">
    <original>R</original>
    <variation>G</variation>
    <location>
        <position position="448"/>
    </location>
</feature>
<feature type="sequence variant">
    <original>A</original>
    <variation>T</variation>
    <location>
        <position position="465"/>
    </location>
</feature>
<feature type="sequence variant">
    <original>D</original>
    <variation>A</variation>
    <location>
        <position position="474"/>
    </location>
</feature>
<feature type="sequence variant">
    <original>A</original>
    <variation>V</variation>
    <location>
        <position position="478"/>
    </location>
</feature>
<feature type="sequence variant">
    <original>S</original>
    <variation>T</variation>
    <location>
        <position position="479"/>
    </location>
</feature>
<feature type="sequence variant">
    <original>Q</original>
    <variation>L</variation>
    <location>
        <position position="483"/>
    </location>
</feature>
<feature type="sequence variant">
    <original>D</original>
    <variation>G</variation>
    <location>
        <position position="487"/>
    </location>
</feature>
<feature type="sequence variant">
    <original>DA</original>
    <variation>EP</variation>
    <location>
        <begin position="493"/>
        <end position="494"/>
    </location>
</feature>
<feature type="sequence variant">
    <original>I</original>
    <variation>R</variation>
    <location>
        <position position="516"/>
    </location>
</feature>
<feature type="sequence variant">
    <original>R</original>
    <variation>G</variation>
    <location>
        <position position="521"/>
    </location>
</feature>
<feature type="sequence variant">
    <original>N</original>
    <variation>D</variation>
    <location>
        <position position="522"/>
    </location>
</feature>
<feature type="strand" evidence="14">
    <location>
        <begin position="33"/>
        <end position="43"/>
    </location>
</feature>
<feature type="helix" evidence="14">
    <location>
        <begin position="45"/>
        <end position="60"/>
    </location>
</feature>
<feature type="helix" evidence="14">
    <location>
        <begin position="66"/>
        <end position="77"/>
    </location>
</feature>
<feature type="turn" evidence="14">
    <location>
        <begin position="78"/>
        <end position="80"/>
    </location>
</feature>
<feature type="helix" evidence="14">
    <location>
        <begin position="84"/>
        <end position="91"/>
    </location>
</feature>
<feature type="strand" evidence="14">
    <location>
        <begin position="95"/>
        <end position="106"/>
    </location>
</feature>
<feature type="strand" evidence="14">
    <location>
        <begin position="108"/>
        <end position="116"/>
    </location>
</feature>
<feature type="helix" evidence="14">
    <location>
        <begin position="124"/>
        <end position="130"/>
    </location>
</feature>
<feature type="helix" evidence="14">
    <location>
        <begin position="160"/>
        <end position="183"/>
    </location>
</feature>
<feature type="helix" evidence="14">
    <location>
        <begin position="188"/>
        <end position="200"/>
    </location>
</feature>
<feature type="turn" evidence="14">
    <location>
        <begin position="202"/>
        <end position="204"/>
    </location>
</feature>
<feature type="helix" evidence="14">
    <location>
        <begin position="207"/>
        <end position="209"/>
    </location>
</feature>
<feature type="helix" evidence="14">
    <location>
        <begin position="213"/>
        <end position="225"/>
    </location>
</feature>
<feature type="helix" evidence="14">
    <location>
        <begin position="227"/>
        <end position="241"/>
    </location>
</feature>
<feature type="helix" evidence="14">
    <location>
        <begin position="249"/>
        <end position="265"/>
    </location>
</feature>
<feature type="helix" evidence="14">
    <location>
        <begin position="267"/>
        <end position="276"/>
    </location>
</feature>
<feature type="turn" evidence="14">
    <location>
        <begin position="277"/>
        <end position="279"/>
    </location>
</feature>
<feature type="helix" evidence="14">
    <location>
        <begin position="282"/>
        <end position="285"/>
    </location>
</feature>
<feature type="helix" evidence="14">
    <location>
        <begin position="287"/>
        <end position="289"/>
    </location>
</feature>
<feature type="helix" evidence="14">
    <location>
        <begin position="290"/>
        <end position="305"/>
    </location>
</feature>
<feature type="helix" evidence="14">
    <location>
        <begin position="306"/>
        <end position="309"/>
    </location>
</feature>
<feature type="turn" evidence="14">
    <location>
        <begin position="310"/>
        <end position="312"/>
    </location>
</feature>
<feature type="helix" evidence="14">
    <location>
        <begin position="313"/>
        <end position="316"/>
    </location>
</feature>
<feature type="helix" evidence="14">
    <location>
        <begin position="318"/>
        <end position="323"/>
    </location>
</feature>
<feature type="helix" evidence="14">
    <location>
        <begin position="326"/>
        <end position="328"/>
    </location>
</feature>
<feature type="helix" evidence="14">
    <location>
        <begin position="330"/>
        <end position="344"/>
    </location>
</feature>
<feature type="helix" evidence="14">
    <location>
        <begin position="359"/>
        <end position="384"/>
    </location>
</feature>
<feature type="helix" evidence="14">
    <location>
        <begin position="388"/>
        <end position="403"/>
    </location>
</feature>
<feature type="helix" evidence="14">
    <location>
        <begin position="405"/>
        <end position="408"/>
    </location>
</feature>
<protein>
    <recommendedName>
        <fullName>Nucleoprotein</fullName>
    </recommendedName>
    <alternativeName>
        <fullName>Nucleocapsid protein</fullName>
        <shortName>NP</shortName>
        <shortName>Protein N</shortName>
    </alternativeName>
</protein>
<organismHost>
    <name type="scientific">Homo sapiens</name>
    <name type="common">Human</name>
    <dbReference type="NCBI Taxonomy" id="9606"/>
</organismHost>
<gene>
    <name type="primary">N</name>
    <name type="synonym">NP</name>
</gene>
<evidence type="ECO:0000250" key="1">
    <source>
        <dbReference type="UniProtKB" id="O57286"/>
    </source>
</evidence>
<evidence type="ECO:0000250" key="2">
    <source>
        <dbReference type="UniProtKB" id="P04851"/>
    </source>
</evidence>
<evidence type="ECO:0000250" key="3">
    <source>
        <dbReference type="UniProtKB" id="P06159"/>
    </source>
</evidence>
<evidence type="ECO:0000250" key="4">
    <source>
        <dbReference type="UniProtKB" id="P10050"/>
    </source>
</evidence>
<evidence type="ECO:0000250" key="5">
    <source>
        <dbReference type="UniProtKB" id="Q07097"/>
    </source>
</evidence>
<evidence type="ECO:0000250" key="6">
    <source>
        <dbReference type="UniProtKB" id="Q77M43"/>
    </source>
</evidence>
<evidence type="ECO:0000250" key="7">
    <source>
        <dbReference type="UniProtKB" id="Q9WMB5"/>
    </source>
</evidence>
<evidence type="ECO:0000256" key="8">
    <source>
        <dbReference type="SAM" id="MobiDB-lite"/>
    </source>
</evidence>
<evidence type="ECO:0000269" key="9">
    <source>
    </source>
</evidence>
<evidence type="ECO:0000269" key="10">
    <source>
    </source>
</evidence>
<evidence type="ECO:0000305" key="11"/>
<evidence type="ECO:0000305" key="12">
    <source>
    </source>
</evidence>
<evidence type="ECO:0007744" key="13">
    <source>
        <dbReference type="PDB" id="5E4V"/>
    </source>
</evidence>
<evidence type="ECO:0007829" key="14">
    <source>
        <dbReference type="PDB" id="5E4V"/>
    </source>
</evidence>
<proteinExistence type="evidence at protein level"/>
<keyword id="KW-0002">3D-structure</keyword>
<keyword id="KW-0167">Capsid protein</keyword>
<keyword id="KW-1139">Helical capsid protein</keyword>
<keyword id="KW-1035">Host cytoplasm</keyword>
<keyword id="KW-1048">Host nucleus</keyword>
<keyword id="KW-0945">Host-virus interaction</keyword>
<keyword id="KW-0597">Phosphoprotein</keyword>
<keyword id="KW-0687">Ribonucleoprotein</keyword>
<keyword id="KW-0694">RNA-binding</keyword>
<keyword id="KW-0543">Viral nucleoprotein</keyword>
<keyword id="KW-0946">Virion</keyword>
<name>NCAP_MEASF</name>
<organism>
    <name type="scientific">Measles virus (strain Edmonston B)</name>
    <name type="common">MeV</name>
    <name type="synonym">Subacute sclerose panencephalitis virus</name>
    <dbReference type="NCBI Taxonomy" id="70146"/>
    <lineage>
        <taxon>Viruses</taxon>
        <taxon>Riboviria</taxon>
        <taxon>Orthornavirae</taxon>
        <taxon>Negarnaviricota</taxon>
        <taxon>Haploviricotina</taxon>
        <taxon>Monjiviricetes</taxon>
        <taxon>Mononegavirales</taxon>
        <taxon>Paramyxoviridae</taxon>
        <taxon>Orthoparamyxovirinae</taxon>
        <taxon>Morbillivirus</taxon>
        <taxon>Morbillivirus hominis</taxon>
        <taxon>Measles morbillivirus</taxon>
    </lineage>
</organism>
<accession>P0DXN6</accession>
<accession>O92927</accession>
<accession>Q77M21</accession>
<accession>Q77M26</accession>
<accession>Q77M32</accession>
<accession>Q783Q8</accession>
<accession>Q83520</accession>
<accession>Q83523</accession>
<accession>Q83526</accession>
<accession>Q83726</accession>
<accession>Q89890</accession>
<accession>Q89933</accession>
<accession>Q91QN7</accession>
<accession>Q9IC39</accession>
<dbReference type="EMBL" id="Z66517">
    <property type="protein sequence ID" value="CAA91363.1"/>
    <property type="molecule type" value="Genomic_RNA"/>
</dbReference>
<dbReference type="EMBL" id="U03650">
    <property type="protein sequence ID" value="AAA56640.1"/>
    <property type="molecule type" value="Genomic_RNA"/>
</dbReference>
<dbReference type="EMBL" id="U03653">
    <property type="protein sequence ID" value="AAA56643.1"/>
    <property type="molecule type" value="Genomic_RNA"/>
</dbReference>
<dbReference type="EMBL" id="U03656">
    <property type="protein sequence ID" value="AAA56646.1"/>
    <property type="molecule type" value="Genomic_RNA"/>
</dbReference>
<dbReference type="EMBL" id="U03658">
    <property type="protein sequence ID" value="AAA56648.1"/>
    <property type="molecule type" value="Genomic_RNA"/>
</dbReference>
<dbReference type="EMBL" id="U03661">
    <property type="protein sequence ID" value="AAA56651.1"/>
    <property type="molecule type" value="Genomic_RNA"/>
</dbReference>
<dbReference type="EMBL" id="U01987">
    <property type="protein sequence ID" value="AAA18986.1"/>
    <property type="molecule type" value="mRNA"/>
</dbReference>
<dbReference type="EMBL" id="U01991">
    <property type="protein sequence ID" value="AAA18990.1"/>
    <property type="molecule type" value="mRNA"/>
</dbReference>
<dbReference type="EMBL" id="U01992">
    <property type="protein sequence ID" value="AAA18991.1"/>
    <property type="molecule type" value="mRNA"/>
</dbReference>
<dbReference type="EMBL" id="U01993">
    <property type="protein sequence ID" value="AAA18992.1"/>
    <property type="molecule type" value="mRNA"/>
</dbReference>
<dbReference type="EMBL" id="U01994">
    <property type="protein sequence ID" value="AAA18993.1"/>
    <property type="molecule type" value="mRNA"/>
</dbReference>
<dbReference type="EMBL" id="U01996">
    <property type="protein sequence ID" value="AAA18995.1"/>
    <property type="molecule type" value="mRNA"/>
</dbReference>
<dbReference type="EMBL" id="AB052821">
    <property type="protein sequence ID" value="BAB60956.1"/>
    <property type="molecule type" value="Genomic_RNA"/>
</dbReference>
<dbReference type="EMBL" id="AF045218">
    <property type="protein sequence ID" value="AAC03050.1"/>
    <property type="molecule type" value="Genomic_RNA"/>
</dbReference>
<dbReference type="PIR" id="A49601">
    <property type="entry name" value="A49601"/>
</dbReference>
<dbReference type="PDB" id="5E4V">
    <property type="method" value="X-ray"/>
    <property type="resolution" value="2.71 A"/>
    <property type="chains" value="A=21-408"/>
</dbReference>
<dbReference type="PDBsum" id="5E4V"/>
<dbReference type="SMR" id="P0DXN6"/>
<dbReference type="Proteomes" id="UP000100252">
    <property type="component" value="Genome"/>
</dbReference>
<dbReference type="GO" id="GO:0019029">
    <property type="term" value="C:helical viral capsid"/>
    <property type="evidence" value="ECO:0007669"/>
    <property type="project" value="UniProtKB-KW"/>
</dbReference>
<dbReference type="GO" id="GO:0030430">
    <property type="term" value="C:host cell cytoplasm"/>
    <property type="evidence" value="ECO:0007669"/>
    <property type="project" value="UniProtKB-SubCell"/>
</dbReference>
<dbReference type="GO" id="GO:0042025">
    <property type="term" value="C:host cell nucleus"/>
    <property type="evidence" value="ECO:0007669"/>
    <property type="project" value="UniProtKB-SubCell"/>
</dbReference>
<dbReference type="GO" id="GO:1990904">
    <property type="term" value="C:ribonucleoprotein complex"/>
    <property type="evidence" value="ECO:0007669"/>
    <property type="project" value="UniProtKB-KW"/>
</dbReference>
<dbReference type="GO" id="GO:0019013">
    <property type="term" value="C:viral nucleocapsid"/>
    <property type="evidence" value="ECO:0007669"/>
    <property type="project" value="UniProtKB-KW"/>
</dbReference>
<dbReference type="GO" id="GO:0003723">
    <property type="term" value="F:RNA binding"/>
    <property type="evidence" value="ECO:0007669"/>
    <property type="project" value="UniProtKB-KW"/>
</dbReference>
<dbReference type="GO" id="GO:0005198">
    <property type="term" value="F:structural molecule activity"/>
    <property type="evidence" value="ECO:0007669"/>
    <property type="project" value="InterPro"/>
</dbReference>
<dbReference type="InterPro" id="IPR002021">
    <property type="entry name" value="Paramyx_ncap"/>
</dbReference>
<dbReference type="Pfam" id="PF00973">
    <property type="entry name" value="Paramyxo_ncap"/>
    <property type="match status" value="1"/>
</dbReference>
<reference key="1">
    <citation type="journal article" date="1990" name="EMBO J.">
        <title>Infectious measles virus from cloned cDNA.</title>
        <authorList>
            <person name="Ballart I."/>
            <person name="Eschle D."/>
            <person name="Cattaneo R."/>
            <person name="Schmid A."/>
            <person name="Metzler M."/>
            <person name="Chan J."/>
            <person name="Pifko-Hirst S."/>
            <person name="Udem S.A."/>
            <person name="Billeter M.A."/>
        </authorList>
    </citation>
    <scope>NUCLEOTIDE SEQUENCE [GENOMIC RNA]</scope>
    <scope>RETRACTED PAPER</scope>
</reference>
<reference key="2">
    <citation type="journal article" date="1994" name="Virus Res.">
        <title>Comparison of sequences of the H, F, and N coding genes of measles virus vaccine strains.</title>
        <authorList>
            <person name="Rota J.S."/>
            <person name="Wang Z.D."/>
            <person name="Rota P.A."/>
            <person name="Bellini W.J."/>
        </authorList>
    </citation>
    <scope>NUCLEOTIDE SEQUENCE [GENOMIC RNA]</scope>
</reference>
<reference key="3">
    <citation type="journal article" date="1994" name="Virology">
        <title>Evolution of the nucleoprotein and matrix genes from wild-type strains of measles virus isolated from recent epidemics.</title>
        <authorList>
            <person name="Rota P.A."/>
            <person name="Bloom A.E."/>
            <person name="Vanchiere J.A."/>
            <person name="Bellini W.J."/>
        </authorList>
    </citation>
    <scope>NUCLEOTIDE SEQUENCE [GENOMIC RNA]</scope>
    <source>
        <strain>Philadelphia-26</strain>
    </source>
</reference>
<reference key="4">
    <citation type="journal article" date="1995" name="EMBO J.">
        <title>Rescue of measles viruses from cloned DNA.</title>
        <authorList>
            <person name="Radecke F."/>
            <person name="Spielhofer P."/>
            <person name="Schneider H."/>
            <person name="Kaelin K."/>
            <person name="Huber M."/>
            <person name="Doetsch C."/>
            <person name="Christiansen G."/>
            <person name="Billeter M.A."/>
        </authorList>
    </citation>
    <scope>NUCLEOTIDE SEQUENCE [GENOMIC RNA]</scope>
</reference>
<reference key="5">
    <citation type="journal article" date="1998" name="Virus Res.">
        <title>New genetic group of measles virus isolated in the People's Republic of China.</title>
        <authorList>
            <person name="Xu W.B."/>
            <person name="Tamin A."/>
            <person name="Rota J.S."/>
            <person name="Zhang L."/>
            <person name="Bellini W.J."/>
            <person name="Rota P.A."/>
        </authorList>
    </citation>
    <scope>NUCLEOTIDE SEQUENCE [GENOMIC RNA]</scope>
    <source>
        <strain>China93-5</strain>
    </source>
</reference>
<reference key="6">
    <citation type="submission" date="1995-10" db="EMBL/GenBank/DDBJ databases">
        <authorList>
            <person name="Billeter M.A."/>
        </authorList>
    </citation>
    <scope>NUCLEOTIDE SEQUENCE [GENOMIC RNA]</scope>
</reference>
<reference key="7">
    <citation type="submission" date="2004-08" db="EMBL/GenBank/DDBJ databases">
        <title>The whole gene sequence of Measles virus.</title>
        <authorList>
            <person name="Zhao D."/>
        </authorList>
    </citation>
    <scope>NUCLEOTIDE SEQUENCE [GENOMIC RNA]</scope>
</reference>
<reference key="8">
    <citation type="journal article" date="1991" name="EMBO J.">
        <authorList>
            <person name="Eschle D."/>
            <person name="Cattaneo R."/>
            <person name="Schmid A."/>
            <person name="Metzler M."/>
            <person name="Chan J."/>
            <person name="Pifko-Hirst S."/>
            <person name="Udem S.A."/>
            <person name="Billeter M.A."/>
        </authorList>
    </citation>
    <scope>RETRACTION NOTICE OF PUBMED:2303032</scope>
</reference>
<reference key="9">
    <citation type="journal article" date="2003" name="J. Virol.">
        <title>Measles virus (MV) nucleoprotein binds to a novel cell surface receptor distinct from FcgammaRII via its C-terminal domain: role in MV-induced immunosuppression.</title>
        <authorList>
            <person name="Laine D."/>
            <person name="Trescol-Biemont M.C."/>
            <person name="Longhi S."/>
            <person name="Libeau G."/>
            <person name="Marie J.C."/>
            <person name="Vidalain P.O."/>
            <person name="Azocar O."/>
            <person name="Diallo A."/>
            <person name="Canard B."/>
            <person name="Rabourdin-Combe C."/>
            <person name="Valentin H."/>
        </authorList>
    </citation>
    <scope>INTERACTION WITH HUMAN NR PROTEIN</scope>
</reference>
<reference key="10">
    <citation type="journal article" date="2005" name="J. Gen. Virol.">
        <title>Measles virus nucleoprotein induces cell-proliferation arrest and apoptosis through NTAIL-NR and NCORE-FcgammaRIIB1 interactions, respectively.</title>
        <authorList>
            <person name="Laine D."/>
            <person name="Bourhis J.-M."/>
            <person name="Longhi S."/>
            <person name="Flacher M."/>
            <person name="Cassard L."/>
            <person name="Canard B."/>
            <person name="Sautes-Fridman C."/>
            <person name="Rabourdin-Combe C."/>
            <person name="Valentin H."/>
        </authorList>
    </citation>
    <scope>INTERACTION WITH HUMAN NR PROTEIN</scope>
    <scope>INTERACTION WITH HUMAN FCGR2B</scope>
</reference>
<reference evidence="13" key="11">
    <citation type="journal article" date="2015" name="J. Virol.">
        <title>Crystal Structure of the Measles Virus Nucleoprotein Core in Complex with an N-Terminal Region of Phosphoprotein.</title>
        <authorList>
            <person name="Guryanov S.G."/>
            <person name="Liljeroos L."/>
            <person name="Kasaragod P."/>
            <person name="Kajander T."/>
            <person name="Butcher S.J."/>
        </authorList>
    </citation>
    <scope>X-RAY CRYSTALLOGRAPHY (2.71 ANGSTROMS) OF 21-408 IN COMPLEX WITH THE PHOSPHOPROTEIN</scope>
    <scope>DOMAIN</scope>
    <scope>INTERACTION WITH THE PHOSPHOPROTEIN</scope>
    <scope>FUNCTION</scope>
</reference>